<comment type="function">
    <text>Shows enzymatic activity towards crystalline cellulose. At long reaction times. It is also able to degrade carboxymethyl cellulose and barley B-glucan.</text>
</comment>
<comment type="catalytic activity">
    <reaction>
        <text>Hydrolysis of (1-&gt;4)-beta-D-glucosidic linkages in cellulose and cellotetraose, releasing cellobiose from the non-reducing ends of the chains.</text>
        <dbReference type="EC" id="3.2.1.91"/>
    </reaction>
</comment>
<comment type="similarity">
    <text evidence="7">Belongs to the glycosyl hydrolase 6 (cellulase B) family.</text>
</comment>
<feature type="signal peptide" evidence="2">
    <location>
        <begin position="1"/>
        <end position="20"/>
    </location>
</feature>
<feature type="chain" id="PRO_0000007902" description="Exoglucanase 3">
    <location>
        <begin position="21"/>
        <end position="438"/>
    </location>
</feature>
<feature type="domain" description="CBM1" evidence="3">
    <location>
        <begin position="21"/>
        <end position="59"/>
    </location>
</feature>
<feature type="region of interest" description="Disordered" evidence="6">
    <location>
        <begin position="57"/>
        <end position="90"/>
    </location>
</feature>
<feature type="region of interest" description="Linker">
    <location>
        <begin position="60"/>
        <end position="87"/>
    </location>
</feature>
<feature type="region of interest" description="Catalytic">
    <location>
        <begin position="88"/>
        <end position="438"/>
    </location>
</feature>
<feature type="compositionally biased region" description="Low complexity" evidence="6">
    <location>
        <begin position="61"/>
        <end position="79"/>
    </location>
</feature>
<feature type="active site" description="Proton donor" evidence="5">
    <location>
        <position position="215"/>
    </location>
</feature>
<feature type="active site" description="Nucleophile" evidence="4">
    <location>
        <position position="393"/>
    </location>
</feature>
<feature type="disulfide bond" evidence="1">
    <location>
        <begin position="28"/>
        <end position="45"/>
    </location>
</feature>
<feature type="disulfide bond" evidence="1">
    <location>
        <begin position="39"/>
        <end position="55"/>
    </location>
</feature>
<feature type="disulfide bond" evidence="1">
    <location>
        <begin position="170"/>
        <end position="229"/>
    </location>
</feature>
<feature type="disulfide bond" evidence="1">
    <location>
        <begin position="360"/>
        <end position="407"/>
    </location>
</feature>
<feature type="sequence variant">
    <original>V</original>
    <variation>T</variation>
    <location>
        <position position="133"/>
    </location>
</feature>
<feature type="sequence variant">
    <original>R</original>
    <variation>Q</variation>
    <location>
        <position position="152"/>
    </location>
</feature>
<feature type="sequence variant">
    <original>V</original>
    <variation>I</variation>
    <location>
        <position position="244"/>
    </location>
</feature>
<feature type="sequence variant">
    <original>N</original>
    <variation>D</variation>
    <location>
        <position position="248"/>
    </location>
</feature>
<feature type="sequence variant">
    <original>N</original>
    <variation>S</variation>
    <location>
        <position position="398"/>
    </location>
</feature>
<name>GUX3_AGABI</name>
<protein>
    <recommendedName>
        <fullName>Exoglucanase 3</fullName>
        <ecNumber>3.2.1.91</ecNumber>
    </recommendedName>
    <alternativeName>
        <fullName>1,4-beta-cellobiohydrolase 3</fullName>
    </alternativeName>
    <alternativeName>
        <fullName>Exocellobiohydrolase 3</fullName>
    </alternativeName>
</protein>
<sequence length="438" mass="46210">MFKFAALLALASLVPGFVQAQSPVWGQCGGNGWTGPTTCASGSTCVKQNDFYSQCLPNNQAPPSTTTQPGTTPPATTTSGGTGPTSGAGNPYTGKTVWLSPFYADEVAQAAADISNPSLATKAASVAKIPTFVWFDTVAKVPDLGGYLADARSKNQLVQIVVYDLPDRDCAALASNGEFSLANDGLNKYKNYVDQIAAQIKQFPDVSVVAVIEPDSLANLVTNLNVQKCANAQSAYKEGVIYAVQKLNAVGVTMYIDAGHAGWLGWPANLSPAAQLFAQIYRDAGSPRNLRGIATNVANFNALRASSPDPITQGNSNYDEIHYIEALAPMLSNAGFPAHFIVDQGRSGVQNIRDQWGDWCNVKGAGFGQRPTTNTGSSLIDAIVWVKPGGECDGTSDNSSPRFDSHCSLSDAHQPAPEAGTWFQAYFETLVANANPAL</sequence>
<accession>P49075</accession>
<proteinExistence type="evidence at protein level"/>
<gene>
    <name type="primary">cel3</name>
</gene>
<organism>
    <name type="scientific">Agaricus bisporus</name>
    <name type="common">White button mushroom</name>
    <dbReference type="NCBI Taxonomy" id="5341"/>
    <lineage>
        <taxon>Eukaryota</taxon>
        <taxon>Fungi</taxon>
        <taxon>Dikarya</taxon>
        <taxon>Basidiomycota</taxon>
        <taxon>Agaricomycotina</taxon>
        <taxon>Agaricomycetes</taxon>
        <taxon>Agaricomycetidae</taxon>
        <taxon>Agaricales</taxon>
        <taxon>Agaricineae</taxon>
        <taxon>Agaricaceae</taxon>
        <taxon>Agaricus</taxon>
    </lineage>
</organism>
<keyword id="KW-0119">Carbohydrate metabolism</keyword>
<keyword id="KW-0136">Cellulose degradation</keyword>
<keyword id="KW-0903">Direct protein sequencing</keyword>
<keyword id="KW-1015">Disulfide bond</keyword>
<keyword id="KW-0326">Glycosidase</keyword>
<keyword id="KW-0378">Hydrolase</keyword>
<keyword id="KW-0624">Polysaccharide degradation</keyword>
<keyword id="KW-0732">Signal</keyword>
<dbReference type="EC" id="3.2.1.91"/>
<dbReference type="EMBL" id="L24519">
    <property type="protein sequence ID" value="AAA50607.1"/>
    <property type="molecule type" value="mRNA"/>
</dbReference>
<dbReference type="EMBL" id="L24520">
    <property type="protein sequence ID" value="AAA50608.1"/>
    <property type="molecule type" value="mRNA"/>
</dbReference>
<dbReference type="EMBL" id="Z34007">
    <property type="protein sequence ID" value="CAA83971.1"/>
    <property type="molecule type" value="Genomic_DNA"/>
</dbReference>
<dbReference type="PIR" id="S70602">
    <property type="entry name" value="S70602"/>
</dbReference>
<dbReference type="SMR" id="P49075"/>
<dbReference type="CAZy" id="CBM1">
    <property type="family name" value="Carbohydrate-Binding Module Family 1"/>
</dbReference>
<dbReference type="CAZy" id="GH6">
    <property type="family name" value="Glycoside Hydrolase Family 6"/>
</dbReference>
<dbReference type="BioCyc" id="MetaCyc:MONOMER-17626"/>
<dbReference type="GO" id="GO:0005576">
    <property type="term" value="C:extracellular region"/>
    <property type="evidence" value="ECO:0007669"/>
    <property type="project" value="InterPro"/>
</dbReference>
<dbReference type="GO" id="GO:0016162">
    <property type="term" value="F:cellulose 1,4-beta-cellobiosidase activity"/>
    <property type="evidence" value="ECO:0007669"/>
    <property type="project" value="UniProtKB-EC"/>
</dbReference>
<dbReference type="GO" id="GO:0030248">
    <property type="term" value="F:cellulose binding"/>
    <property type="evidence" value="ECO:0007669"/>
    <property type="project" value="InterPro"/>
</dbReference>
<dbReference type="GO" id="GO:0030245">
    <property type="term" value="P:cellulose catabolic process"/>
    <property type="evidence" value="ECO:0007669"/>
    <property type="project" value="UniProtKB-KW"/>
</dbReference>
<dbReference type="FunFam" id="3.20.20.40:FF:000001">
    <property type="entry name" value="Glucanase"/>
    <property type="match status" value="1"/>
</dbReference>
<dbReference type="Gene3D" id="3.20.20.40">
    <property type="entry name" value="1, 4-beta cellobiohydrolase"/>
    <property type="match status" value="1"/>
</dbReference>
<dbReference type="InterPro" id="IPR016288">
    <property type="entry name" value="Beta_cellobiohydrolase"/>
</dbReference>
<dbReference type="InterPro" id="IPR036434">
    <property type="entry name" value="Beta_cellobiohydrolase_sf"/>
</dbReference>
<dbReference type="InterPro" id="IPR035971">
    <property type="entry name" value="CBD_sf"/>
</dbReference>
<dbReference type="InterPro" id="IPR000254">
    <property type="entry name" value="Cellulose-bd_dom_fun"/>
</dbReference>
<dbReference type="InterPro" id="IPR001524">
    <property type="entry name" value="Glyco_hydro_6_CS"/>
</dbReference>
<dbReference type="PANTHER" id="PTHR34876">
    <property type="match status" value="1"/>
</dbReference>
<dbReference type="PANTHER" id="PTHR34876:SF4">
    <property type="entry name" value="1,4-BETA-D-GLUCAN CELLOBIOHYDROLASE C-RELATED"/>
    <property type="match status" value="1"/>
</dbReference>
<dbReference type="Pfam" id="PF00734">
    <property type="entry name" value="CBM_1"/>
    <property type="match status" value="1"/>
</dbReference>
<dbReference type="Pfam" id="PF01341">
    <property type="entry name" value="Glyco_hydro_6"/>
    <property type="match status" value="1"/>
</dbReference>
<dbReference type="PIRSF" id="PIRSF001100">
    <property type="entry name" value="Beta_cellobiohydrolase"/>
    <property type="match status" value="1"/>
</dbReference>
<dbReference type="PRINTS" id="PR00733">
    <property type="entry name" value="GLHYDRLASE6"/>
</dbReference>
<dbReference type="SMART" id="SM00236">
    <property type="entry name" value="fCBD"/>
    <property type="match status" value="1"/>
</dbReference>
<dbReference type="SUPFAM" id="SSF57180">
    <property type="entry name" value="Cellulose-binding domain"/>
    <property type="match status" value="1"/>
</dbReference>
<dbReference type="SUPFAM" id="SSF51989">
    <property type="entry name" value="Glycosyl hydrolases family 6, cellulases"/>
    <property type="match status" value="1"/>
</dbReference>
<dbReference type="PROSITE" id="PS00562">
    <property type="entry name" value="CBM1_1"/>
    <property type="match status" value="1"/>
</dbReference>
<dbReference type="PROSITE" id="PS51164">
    <property type="entry name" value="CBM1_2"/>
    <property type="match status" value="1"/>
</dbReference>
<dbReference type="PROSITE" id="PS00655">
    <property type="entry name" value="GLYCOSYL_HYDROL_F6_1"/>
    <property type="match status" value="1"/>
</dbReference>
<dbReference type="PROSITE" id="PS00656">
    <property type="entry name" value="GLYCOSYL_HYDROL_F6_2"/>
    <property type="match status" value="1"/>
</dbReference>
<evidence type="ECO:0000250" key="1"/>
<evidence type="ECO:0000255" key="2"/>
<evidence type="ECO:0000255" key="3">
    <source>
        <dbReference type="PROSITE-ProRule" id="PRU00597"/>
    </source>
</evidence>
<evidence type="ECO:0000255" key="4">
    <source>
        <dbReference type="PROSITE-ProRule" id="PRU10056"/>
    </source>
</evidence>
<evidence type="ECO:0000255" key="5">
    <source>
        <dbReference type="PROSITE-ProRule" id="PRU10057"/>
    </source>
</evidence>
<evidence type="ECO:0000256" key="6">
    <source>
        <dbReference type="SAM" id="MobiDB-lite"/>
    </source>
</evidence>
<evidence type="ECO:0000305" key="7"/>
<reference key="1">
    <citation type="journal article" date="1994" name="Appl. Environ. Microbiol.">
        <title>The cel3 gene of Agaricus bisporus codes for a modular cellulase and is transcriptionally regulated by the carbon source.</title>
        <authorList>
            <person name="Chow C.-M."/>
            <person name="Yague E."/>
            <person name="Raguz S."/>
            <person name="Wood D.A."/>
            <person name="Thurston C.F."/>
        </authorList>
    </citation>
    <scope>NUCLEOTIDE SEQUENCE [MRNA]</scope>
    <scope>PROTEIN SEQUENCE OF 255-277 AND 331-351</scope>
    <source>
        <strain>D649</strain>
    </source>
</reference>
<reference key="2">
    <citation type="journal article" date="1996" name="Curr. Genet.">
        <title>Correlation of exons with functional domains and folding regions in a cellulase from Agaricus bisporus.</title>
        <authorList>
            <person name="Yague E."/>
            <person name="Chow C.-M."/>
            <person name="Challen M.P."/>
            <person name="Thurston C.F."/>
        </authorList>
    </citation>
    <scope>NUCLEOTIDE SEQUENCE [GENOMIC DNA]</scope>
    <source>
        <tissue>Mycelium</tissue>
    </source>
</reference>